<name>NAR1_TALMQ</name>
<keyword id="KW-0004">4Fe-4S</keyword>
<keyword id="KW-0408">Iron</keyword>
<keyword id="KW-0411">Iron-sulfur</keyword>
<keyword id="KW-0479">Metal-binding</keyword>
<keyword id="KW-1185">Reference proteome</keyword>
<accession>B6QQH9</accession>
<organism>
    <name type="scientific">Talaromyces marneffei (strain ATCC 18224 / CBS 334.59 / QM 7333)</name>
    <name type="common">Penicillium marneffei</name>
    <dbReference type="NCBI Taxonomy" id="441960"/>
    <lineage>
        <taxon>Eukaryota</taxon>
        <taxon>Fungi</taxon>
        <taxon>Dikarya</taxon>
        <taxon>Ascomycota</taxon>
        <taxon>Pezizomycotina</taxon>
        <taxon>Eurotiomycetes</taxon>
        <taxon>Eurotiomycetidae</taxon>
        <taxon>Eurotiales</taxon>
        <taxon>Trichocomaceae</taxon>
        <taxon>Talaromyces</taxon>
        <taxon>Talaromyces sect. Talaromyces</taxon>
    </lineage>
</organism>
<protein>
    <recommendedName>
        <fullName>Cytosolic Fe-S cluster assembly factor nar1</fullName>
    </recommendedName>
    <alternativeName>
        <fullName>Nuclear architecture-related protein 1</fullName>
    </alternativeName>
</protein>
<feature type="chain" id="PRO_0000383734" description="Cytosolic Fe-S cluster assembly factor nar1">
    <location>
        <begin position="1"/>
        <end position="590"/>
    </location>
</feature>
<feature type="binding site" evidence="2">
    <location>
        <position position="20"/>
    </location>
    <ligand>
        <name>[4Fe-4S] cluster</name>
        <dbReference type="ChEBI" id="CHEBI:49883"/>
        <label>1</label>
    </ligand>
</feature>
<feature type="binding site" evidence="2">
    <location>
        <position position="62"/>
    </location>
    <ligand>
        <name>[4Fe-4S] cluster</name>
        <dbReference type="ChEBI" id="CHEBI:49883"/>
        <label>1</label>
    </ligand>
</feature>
<feature type="binding site" evidence="2">
    <location>
        <position position="65"/>
    </location>
    <ligand>
        <name>[4Fe-4S] cluster</name>
        <dbReference type="ChEBI" id="CHEBI:49883"/>
        <label>1</label>
    </ligand>
</feature>
<feature type="binding site" evidence="2">
    <location>
        <position position="68"/>
    </location>
    <ligand>
        <name>[4Fe-4S] cluster</name>
        <dbReference type="ChEBI" id="CHEBI:49883"/>
        <label>1</label>
    </ligand>
</feature>
<feature type="binding site" evidence="2">
    <location>
        <position position="214"/>
    </location>
    <ligand>
        <name>[4Fe-4S] cluster</name>
        <dbReference type="ChEBI" id="CHEBI:49883"/>
        <label>2</label>
    </ligand>
</feature>
<feature type="binding site" evidence="2">
    <location>
        <position position="269"/>
    </location>
    <ligand>
        <name>[4Fe-4S] cluster</name>
        <dbReference type="ChEBI" id="CHEBI:49883"/>
        <label>2</label>
    </ligand>
</feature>
<feature type="binding site" evidence="2">
    <location>
        <position position="456"/>
    </location>
    <ligand>
        <name>[4Fe-4S] cluster</name>
        <dbReference type="ChEBI" id="CHEBI:49883"/>
        <label>2</label>
    </ligand>
</feature>
<feature type="binding site" evidence="2">
    <location>
        <position position="460"/>
    </location>
    <ligand>
        <name>[4Fe-4S] cluster</name>
        <dbReference type="ChEBI" id="CHEBI:49883"/>
        <label>2</label>
    </ligand>
</feature>
<proteinExistence type="inferred from homology"/>
<evidence type="ECO:0000250" key="1"/>
<evidence type="ECO:0000255" key="2"/>
<evidence type="ECO:0000305" key="3"/>
<dbReference type="EMBL" id="DS995904">
    <property type="protein sequence ID" value="EEA20350.1"/>
    <property type="molecule type" value="Genomic_DNA"/>
</dbReference>
<dbReference type="RefSeq" id="XP_002151350.1">
    <property type="nucleotide sequence ID" value="XM_002151314.1"/>
</dbReference>
<dbReference type="SMR" id="B6QQH9"/>
<dbReference type="STRING" id="441960.B6QQH9"/>
<dbReference type="VEuPathDB" id="FungiDB:PMAA_041970"/>
<dbReference type="HOGENOM" id="CLU_018240_0_1_1"/>
<dbReference type="OrthoDB" id="7343at28568"/>
<dbReference type="PhylomeDB" id="B6QQH9"/>
<dbReference type="Proteomes" id="UP000001294">
    <property type="component" value="Unassembled WGS sequence"/>
</dbReference>
<dbReference type="GO" id="GO:0051539">
    <property type="term" value="F:4 iron, 4 sulfur cluster binding"/>
    <property type="evidence" value="ECO:0007669"/>
    <property type="project" value="UniProtKB-KW"/>
</dbReference>
<dbReference type="GO" id="GO:0051536">
    <property type="term" value="F:iron-sulfur cluster binding"/>
    <property type="evidence" value="ECO:0000250"/>
    <property type="project" value="UniProtKB"/>
</dbReference>
<dbReference type="GO" id="GO:0046872">
    <property type="term" value="F:metal ion binding"/>
    <property type="evidence" value="ECO:0007669"/>
    <property type="project" value="UniProtKB-KW"/>
</dbReference>
<dbReference type="GO" id="GO:0016226">
    <property type="term" value="P:iron-sulfur cluster assembly"/>
    <property type="evidence" value="ECO:0000250"/>
    <property type="project" value="UniProtKB"/>
</dbReference>
<dbReference type="FunFam" id="3.30.70.20:FF:000042">
    <property type="entry name" value="Cytosolic Fe-S cluster assembly factor NAR1"/>
    <property type="match status" value="1"/>
</dbReference>
<dbReference type="FunFam" id="3.40.50.1780:FF:000004">
    <property type="entry name" value="Cytosolic Fe-S cluster assembly factor nar1"/>
    <property type="match status" value="1"/>
</dbReference>
<dbReference type="Gene3D" id="3.40.50.1780">
    <property type="match status" value="1"/>
</dbReference>
<dbReference type="Gene3D" id="3.40.950.10">
    <property type="entry name" value="Fe-only Hydrogenase (Larger Subunit), Chain L, domain 3"/>
    <property type="match status" value="1"/>
</dbReference>
<dbReference type="InterPro" id="IPR050340">
    <property type="entry name" value="Cytosolic_Fe-S_CAF"/>
</dbReference>
<dbReference type="InterPro" id="IPR009016">
    <property type="entry name" value="Fe_hydrogenase"/>
</dbReference>
<dbReference type="InterPro" id="IPR004108">
    <property type="entry name" value="Fe_hydrogenase_lsu_C"/>
</dbReference>
<dbReference type="PANTHER" id="PTHR11615">
    <property type="entry name" value="NITRATE, FORMATE, IRON DEHYDROGENASE"/>
    <property type="match status" value="1"/>
</dbReference>
<dbReference type="Pfam" id="PF02906">
    <property type="entry name" value="Fe_hyd_lg_C"/>
    <property type="match status" value="1"/>
</dbReference>
<dbReference type="SUPFAM" id="SSF53920">
    <property type="entry name" value="Fe-only hydrogenase"/>
    <property type="match status" value="1"/>
</dbReference>
<comment type="function">
    <text evidence="1">Component of the cytosolic Fe/S protein assembly machinery. Required for maturation of extramitochondrial Fe/S proteins. May play a role in the transfer of pre-assembled Fe/S clusters to target apoproteins (By similarity).</text>
</comment>
<comment type="similarity">
    <text evidence="3">Belongs to the NARF family.</text>
</comment>
<gene>
    <name type="primary">nar1</name>
    <name type="ORF">PMAA_041970</name>
</gene>
<sequence length="590" mass="64231">MSAILSADDLNDFISPGLACIKPVENFPQKNTASEENAYEVTTEDKIQPENQAPTQISLTDCLACSGCVTSAEAVLISLQSHAEVLNTLDAHRPAPLIITQDGNLSVSRKIEPDERIFVASVSPQVRASLAATYDISERKAGHMIDQLLRGPQGLRNGGKHGNGFTWVLDTNVLRQMVLTLAAQEVTEALHTSSASSGSGKYTSPKKPILSSACPGWICYAEKTHPHVLPHLSRLKSPQALSGTFVKSILSRTLGIAPSQIWHLAVMPCFDKKLEASREELTDAAWSNISDSPVRDVDCVITSRELLMLASSRNISLPSLPLKSLAPTYAPHFPDPTVDSFLFSHTQTSKQSSKYGTSGGYLYYILLLHKEKHPGSRIEVQRGRNSDVIEYSLMSETNEAIMKAARYYGFRNIQNLVRKMKPARASRLPGANRRGAAGSGASSSGLDYAFVEVMACPGGCTNGGGQIRLDDAREANASLHSATPNDSAVTTQKHTTYEQRQWLSRVDEAYFSAESDSEDEAKPAATGSSLHDMEIRTRDILQYWTNLTGAQLEDLVYTTFRKVESDVGKDKNVNDTTRVAELAGKIGGGW</sequence>
<reference key="1">
    <citation type="journal article" date="2015" name="Genome Announc.">
        <title>Genome sequence of the AIDS-associated pathogen Penicillium marneffei (ATCC18224) and its near taxonomic relative Talaromyces stipitatus (ATCC10500).</title>
        <authorList>
            <person name="Nierman W.C."/>
            <person name="Fedorova-Abrams N.D."/>
            <person name="Andrianopoulos A."/>
        </authorList>
    </citation>
    <scope>NUCLEOTIDE SEQUENCE [LARGE SCALE GENOMIC DNA]</scope>
    <source>
        <strain>ATCC 18224 / CBS 334.59 / QM 7333</strain>
    </source>
</reference>